<accession>A2RKJ5</accession>
<organism>
    <name type="scientific">Lactococcus lactis subsp. cremoris (strain MG1363)</name>
    <dbReference type="NCBI Taxonomy" id="416870"/>
    <lineage>
        <taxon>Bacteria</taxon>
        <taxon>Bacillati</taxon>
        <taxon>Bacillota</taxon>
        <taxon>Bacilli</taxon>
        <taxon>Lactobacillales</taxon>
        <taxon>Streptococcaceae</taxon>
        <taxon>Lactococcus</taxon>
        <taxon>Lactococcus cremoris subsp. cremoris</taxon>
    </lineage>
</organism>
<feature type="chain" id="PRO_0000383874" description="Hydroxyethylthiazole kinase">
    <location>
        <begin position="1"/>
        <end position="250"/>
    </location>
</feature>
<feature type="binding site" evidence="1">
    <location>
        <position position="39"/>
    </location>
    <ligand>
        <name>substrate</name>
    </ligand>
</feature>
<feature type="binding site" evidence="1">
    <location>
        <position position="114"/>
    </location>
    <ligand>
        <name>ATP</name>
        <dbReference type="ChEBI" id="CHEBI:30616"/>
    </ligand>
</feature>
<feature type="binding site" evidence="1">
    <location>
        <position position="159"/>
    </location>
    <ligand>
        <name>ATP</name>
        <dbReference type="ChEBI" id="CHEBI:30616"/>
    </ligand>
</feature>
<feature type="binding site" evidence="1">
    <location>
        <position position="186"/>
    </location>
    <ligand>
        <name>substrate</name>
    </ligand>
</feature>
<reference key="1">
    <citation type="journal article" date="2007" name="J. Bacteriol.">
        <title>The complete genome sequence of the lactic acid bacterial paradigm Lactococcus lactis subsp. cremoris MG1363.</title>
        <authorList>
            <person name="Wegmann U."/>
            <person name="O'Connell-Motherway M."/>
            <person name="Zomer A."/>
            <person name="Buist G."/>
            <person name="Shearman C."/>
            <person name="Canchaya C."/>
            <person name="Ventura M."/>
            <person name="Goesmann A."/>
            <person name="Gasson M.J."/>
            <person name="Kuipers O.P."/>
            <person name="van Sinderen D."/>
            <person name="Kok J."/>
        </authorList>
    </citation>
    <scope>NUCLEOTIDE SEQUENCE [LARGE SCALE GENOMIC DNA]</scope>
    <source>
        <strain>MG1363</strain>
    </source>
</reference>
<keyword id="KW-0067">ATP-binding</keyword>
<keyword id="KW-0418">Kinase</keyword>
<keyword id="KW-0460">Magnesium</keyword>
<keyword id="KW-0479">Metal-binding</keyword>
<keyword id="KW-0547">Nucleotide-binding</keyword>
<keyword id="KW-0784">Thiamine biosynthesis</keyword>
<keyword id="KW-0808">Transferase</keyword>
<dbReference type="EC" id="2.7.1.50" evidence="1"/>
<dbReference type="EMBL" id="AM406671">
    <property type="protein sequence ID" value="CAL97807.1"/>
    <property type="molecule type" value="Genomic_DNA"/>
</dbReference>
<dbReference type="RefSeq" id="WP_011835107.1">
    <property type="nucleotide sequence ID" value="NC_009004.1"/>
</dbReference>
<dbReference type="SMR" id="A2RKJ5"/>
<dbReference type="STRING" id="416870.llmg_1216"/>
<dbReference type="KEGG" id="llm:llmg_1216"/>
<dbReference type="eggNOG" id="COG2145">
    <property type="taxonomic scope" value="Bacteria"/>
</dbReference>
<dbReference type="HOGENOM" id="CLU_019943_0_0_9"/>
<dbReference type="OrthoDB" id="9778146at2"/>
<dbReference type="PhylomeDB" id="A2RKJ5"/>
<dbReference type="UniPathway" id="UPA00060">
    <property type="reaction ID" value="UER00139"/>
</dbReference>
<dbReference type="Proteomes" id="UP000000364">
    <property type="component" value="Chromosome"/>
</dbReference>
<dbReference type="GO" id="GO:0005524">
    <property type="term" value="F:ATP binding"/>
    <property type="evidence" value="ECO:0007669"/>
    <property type="project" value="UniProtKB-UniRule"/>
</dbReference>
<dbReference type="GO" id="GO:0004417">
    <property type="term" value="F:hydroxyethylthiazole kinase activity"/>
    <property type="evidence" value="ECO:0007669"/>
    <property type="project" value="UniProtKB-UniRule"/>
</dbReference>
<dbReference type="GO" id="GO:0000287">
    <property type="term" value="F:magnesium ion binding"/>
    <property type="evidence" value="ECO:0007669"/>
    <property type="project" value="UniProtKB-UniRule"/>
</dbReference>
<dbReference type="GO" id="GO:0009228">
    <property type="term" value="P:thiamine biosynthetic process"/>
    <property type="evidence" value="ECO:0007669"/>
    <property type="project" value="UniProtKB-KW"/>
</dbReference>
<dbReference type="GO" id="GO:0009229">
    <property type="term" value="P:thiamine diphosphate biosynthetic process"/>
    <property type="evidence" value="ECO:0007669"/>
    <property type="project" value="UniProtKB-UniRule"/>
</dbReference>
<dbReference type="CDD" id="cd01170">
    <property type="entry name" value="THZ_kinase"/>
    <property type="match status" value="1"/>
</dbReference>
<dbReference type="Gene3D" id="3.40.1190.20">
    <property type="match status" value="1"/>
</dbReference>
<dbReference type="HAMAP" id="MF_00228">
    <property type="entry name" value="Thz_kinase"/>
    <property type="match status" value="1"/>
</dbReference>
<dbReference type="InterPro" id="IPR000417">
    <property type="entry name" value="Hyethyz_kinase"/>
</dbReference>
<dbReference type="InterPro" id="IPR029056">
    <property type="entry name" value="Ribokinase-like"/>
</dbReference>
<dbReference type="NCBIfam" id="NF006830">
    <property type="entry name" value="PRK09355.1"/>
    <property type="match status" value="1"/>
</dbReference>
<dbReference type="Pfam" id="PF02110">
    <property type="entry name" value="HK"/>
    <property type="match status" value="1"/>
</dbReference>
<dbReference type="PIRSF" id="PIRSF000513">
    <property type="entry name" value="Thz_kinase"/>
    <property type="match status" value="1"/>
</dbReference>
<dbReference type="PRINTS" id="PR01099">
    <property type="entry name" value="HYETHTZKNASE"/>
</dbReference>
<dbReference type="SUPFAM" id="SSF53613">
    <property type="entry name" value="Ribokinase-like"/>
    <property type="match status" value="1"/>
</dbReference>
<gene>
    <name evidence="1" type="primary">thiM</name>
    <name type="ordered locus">llmg_1216</name>
</gene>
<evidence type="ECO:0000255" key="1">
    <source>
        <dbReference type="HAMAP-Rule" id="MF_00228"/>
    </source>
</evidence>
<comment type="function">
    <text evidence="1">Catalyzes the phosphorylation of the hydroxyl group of 4-methyl-5-beta-hydroxyethylthiazole (THZ).</text>
</comment>
<comment type="catalytic activity">
    <reaction evidence="1">
        <text>5-(2-hydroxyethyl)-4-methylthiazole + ATP = 4-methyl-5-(2-phosphooxyethyl)-thiazole + ADP + H(+)</text>
        <dbReference type="Rhea" id="RHEA:24212"/>
        <dbReference type="ChEBI" id="CHEBI:15378"/>
        <dbReference type="ChEBI" id="CHEBI:17957"/>
        <dbReference type="ChEBI" id="CHEBI:30616"/>
        <dbReference type="ChEBI" id="CHEBI:58296"/>
        <dbReference type="ChEBI" id="CHEBI:456216"/>
        <dbReference type="EC" id="2.7.1.50"/>
    </reaction>
</comment>
<comment type="cofactor">
    <cofactor evidence="1">
        <name>Mg(2+)</name>
        <dbReference type="ChEBI" id="CHEBI:18420"/>
    </cofactor>
</comment>
<comment type="pathway">
    <text evidence="1">Cofactor biosynthesis; thiamine diphosphate biosynthesis; 4-methyl-5-(2-phosphoethyl)-thiazole from 5-(2-hydroxyethyl)-4-methylthiazole: step 1/1.</text>
</comment>
<comment type="similarity">
    <text evidence="1">Belongs to the Thz kinase family.</text>
</comment>
<proteinExistence type="inferred from homology"/>
<name>THIM_LACLM</name>
<protein>
    <recommendedName>
        <fullName evidence="1">Hydroxyethylthiazole kinase</fullName>
        <ecNumber evidence="1">2.7.1.50</ecNumber>
    </recommendedName>
    <alternativeName>
        <fullName evidence="1">4-methyl-5-beta-hydroxyethylthiazole kinase</fullName>
        <shortName evidence="1">TH kinase</shortName>
        <shortName evidence="1">Thz kinase</shortName>
    </alternativeName>
</protein>
<sequence>MSILSKIQRTQPLILNLANFVTPQRVADVISFIGASPLMTSEIAELESLVEISDAVVVNIGTISESTYPLFLEACRLANQKAKPLILDPVAVNIPFRASIVKRLSQEVKFNIIRGNSAEIAWFADKKSLNKGIDALESNIDNEHARLAAKKTGTVIIETGKVDIISNGHEEMYVDTDSPLFKINVGCGDMLTAVVGTFAAVSDDLFTAAYEATKFFGEAGMIATKQVQNLPGNFVNSLLDTLYQTTHEIK</sequence>